<protein>
    <recommendedName>
        <fullName evidence="1">2-C-methyl-D-erythritol 2,4-cyclodiphosphate synthase</fullName>
        <shortName evidence="1">MECDP-synthase</shortName>
        <shortName evidence="1">MECPP-synthase</shortName>
        <shortName evidence="1">MECPS</shortName>
        <ecNumber evidence="1">4.6.1.12</ecNumber>
    </recommendedName>
</protein>
<evidence type="ECO:0000255" key="1">
    <source>
        <dbReference type="HAMAP-Rule" id="MF_00107"/>
    </source>
</evidence>
<evidence type="ECO:0000305" key="2"/>
<reference key="1">
    <citation type="journal article" date="2006" name="J. Bacteriol.">
        <title>Comparative genomic analysis of three strains of Ehrlichia ruminantium reveals an active process of genome size plasticity.</title>
        <authorList>
            <person name="Frutos R."/>
            <person name="Viari A."/>
            <person name="Ferraz C."/>
            <person name="Morgat A."/>
            <person name="Eychenie S."/>
            <person name="Kandassamy Y."/>
            <person name="Chantal I."/>
            <person name="Bensaid A."/>
            <person name="Coissac E."/>
            <person name="Vachiery N."/>
            <person name="Demaille J."/>
            <person name="Martinez D."/>
        </authorList>
    </citation>
    <scope>NUCLEOTIDE SEQUENCE [LARGE SCALE GENOMIC DNA]</scope>
    <source>
        <strain>Gardel</strain>
    </source>
</reference>
<proteinExistence type="inferred from homology"/>
<accession>Q5FF92</accession>
<name>ISPF_EHRRG</name>
<comment type="function">
    <text evidence="1">Involved in the biosynthesis of isopentenyl diphosphate (IPP) and dimethylallyl diphosphate (DMAPP), two major building blocks of isoprenoid compounds. Catalyzes the conversion of 4-diphosphocytidyl-2-C-methyl-D-erythritol 2-phosphate (CDP-ME2P) to 2-C-methyl-D-erythritol 2,4-cyclodiphosphate (ME-CPP) with a corresponding release of cytidine 5-monophosphate (CMP).</text>
</comment>
<comment type="catalytic activity">
    <reaction evidence="1">
        <text>4-CDP-2-C-methyl-D-erythritol 2-phosphate = 2-C-methyl-D-erythritol 2,4-cyclic diphosphate + CMP</text>
        <dbReference type="Rhea" id="RHEA:23864"/>
        <dbReference type="ChEBI" id="CHEBI:57919"/>
        <dbReference type="ChEBI" id="CHEBI:58483"/>
        <dbReference type="ChEBI" id="CHEBI:60377"/>
        <dbReference type="EC" id="4.6.1.12"/>
    </reaction>
</comment>
<comment type="cofactor">
    <cofactor evidence="1">
        <name>a divalent metal cation</name>
        <dbReference type="ChEBI" id="CHEBI:60240"/>
    </cofactor>
    <text evidence="1">Binds 1 divalent metal cation per subunit.</text>
</comment>
<comment type="pathway">
    <text evidence="1">Isoprenoid biosynthesis; isopentenyl diphosphate biosynthesis via DXP pathway; isopentenyl diphosphate from 1-deoxy-D-xylulose 5-phosphate: step 4/6.</text>
</comment>
<comment type="subunit">
    <text evidence="1">Homotrimer.</text>
</comment>
<comment type="similarity">
    <text evidence="1">Belongs to the IspF family.</text>
</comment>
<comment type="sequence caution" evidence="2">
    <conflict type="erroneous initiation">
        <sequence resource="EMBL-CDS" id="CAI27547"/>
    </conflict>
    <text>Extended N-terminus.</text>
</comment>
<keyword id="KW-0414">Isoprene biosynthesis</keyword>
<keyword id="KW-0456">Lyase</keyword>
<keyword id="KW-0479">Metal-binding</keyword>
<organism>
    <name type="scientific">Ehrlichia ruminantium (strain Gardel)</name>
    <dbReference type="NCBI Taxonomy" id="302409"/>
    <lineage>
        <taxon>Bacteria</taxon>
        <taxon>Pseudomonadati</taxon>
        <taxon>Pseudomonadota</taxon>
        <taxon>Alphaproteobacteria</taxon>
        <taxon>Rickettsiales</taxon>
        <taxon>Anaplasmataceae</taxon>
        <taxon>Ehrlichia</taxon>
    </lineage>
</organism>
<gene>
    <name evidence="1" type="primary">ispF</name>
    <name type="ordered locus">ERGA_CDS_00950</name>
</gene>
<sequence>MSKHTNIPMFRIGIGYDVHRFDNINNDDSNTSITICGIEINYHKKIIAHSDGDVGLHALADAILGAVGCGSIGQHFPNTDQKWKNAKSSHFVIEAQKKAQERGYIISNADIIIICEQPKIMPYALEMQHYIAQFTSIDPSFINIKATTTEKLGAIGRNEGIAAQAIVLCSQQY</sequence>
<feature type="chain" id="PRO_0000237724" description="2-C-methyl-D-erythritol 2,4-cyclodiphosphate synthase">
    <location>
        <begin position="1"/>
        <end position="173"/>
    </location>
</feature>
<feature type="binding site" evidence="1">
    <location>
        <begin position="17"/>
        <end position="19"/>
    </location>
    <ligand>
        <name>4-CDP-2-C-methyl-D-erythritol 2-phosphate</name>
        <dbReference type="ChEBI" id="CHEBI:57919"/>
    </ligand>
</feature>
<feature type="binding site" evidence="1">
    <location>
        <position position="17"/>
    </location>
    <ligand>
        <name>a divalent metal cation</name>
        <dbReference type="ChEBI" id="CHEBI:60240"/>
    </ligand>
</feature>
<feature type="binding site" evidence="1">
    <location>
        <position position="19"/>
    </location>
    <ligand>
        <name>a divalent metal cation</name>
        <dbReference type="ChEBI" id="CHEBI:60240"/>
    </ligand>
</feature>
<feature type="binding site" evidence="1">
    <location>
        <begin position="49"/>
        <end position="50"/>
    </location>
    <ligand>
        <name>4-CDP-2-C-methyl-D-erythritol 2-phosphate</name>
        <dbReference type="ChEBI" id="CHEBI:57919"/>
    </ligand>
</feature>
<feature type="binding site" evidence="1">
    <location>
        <position position="57"/>
    </location>
    <ligand>
        <name>a divalent metal cation</name>
        <dbReference type="ChEBI" id="CHEBI:60240"/>
    </ligand>
</feature>
<feature type="binding site" evidence="1">
    <location>
        <begin position="76"/>
        <end position="80"/>
    </location>
    <ligand>
        <name>4-CDP-2-C-methyl-D-erythritol 2-phosphate</name>
        <dbReference type="ChEBI" id="CHEBI:57919"/>
    </ligand>
</feature>
<feature type="binding site" evidence="1">
    <location>
        <begin position="147"/>
        <end position="150"/>
    </location>
    <ligand>
        <name>4-CDP-2-C-methyl-D-erythritol 2-phosphate</name>
        <dbReference type="ChEBI" id="CHEBI:57919"/>
    </ligand>
</feature>
<feature type="binding site" evidence="1">
    <location>
        <position position="157"/>
    </location>
    <ligand>
        <name>4-CDP-2-C-methyl-D-erythritol 2-phosphate</name>
        <dbReference type="ChEBI" id="CHEBI:57919"/>
    </ligand>
</feature>
<feature type="site" description="Transition state stabilizer" evidence="1">
    <location>
        <position position="49"/>
    </location>
</feature>
<feature type="site" description="Transition state stabilizer" evidence="1">
    <location>
        <position position="148"/>
    </location>
</feature>
<dbReference type="EC" id="4.6.1.12" evidence="1"/>
<dbReference type="EMBL" id="CR925677">
    <property type="protein sequence ID" value="CAI27547.1"/>
    <property type="status" value="ALT_INIT"/>
    <property type="molecule type" value="Genomic_DNA"/>
</dbReference>
<dbReference type="RefSeq" id="WP_044157211.1">
    <property type="nucleotide sequence ID" value="NC_006831.1"/>
</dbReference>
<dbReference type="SMR" id="Q5FF92"/>
<dbReference type="KEGG" id="erg:ERGA_CDS_00950"/>
<dbReference type="HOGENOM" id="CLU_084630_2_0_5"/>
<dbReference type="OrthoDB" id="9804336at2"/>
<dbReference type="UniPathway" id="UPA00056">
    <property type="reaction ID" value="UER00095"/>
</dbReference>
<dbReference type="Proteomes" id="UP000000533">
    <property type="component" value="Chromosome"/>
</dbReference>
<dbReference type="GO" id="GO:0008685">
    <property type="term" value="F:2-C-methyl-D-erythritol 2,4-cyclodiphosphate synthase activity"/>
    <property type="evidence" value="ECO:0007669"/>
    <property type="project" value="UniProtKB-UniRule"/>
</dbReference>
<dbReference type="GO" id="GO:0046872">
    <property type="term" value="F:metal ion binding"/>
    <property type="evidence" value="ECO:0007669"/>
    <property type="project" value="UniProtKB-KW"/>
</dbReference>
<dbReference type="GO" id="GO:0019288">
    <property type="term" value="P:isopentenyl diphosphate biosynthetic process, methylerythritol 4-phosphate pathway"/>
    <property type="evidence" value="ECO:0007669"/>
    <property type="project" value="UniProtKB-UniRule"/>
</dbReference>
<dbReference type="GO" id="GO:0016114">
    <property type="term" value="P:terpenoid biosynthetic process"/>
    <property type="evidence" value="ECO:0007669"/>
    <property type="project" value="InterPro"/>
</dbReference>
<dbReference type="CDD" id="cd00554">
    <property type="entry name" value="MECDP_synthase"/>
    <property type="match status" value="1"/>
</dbReference>
<dbReference type="Gene3D" id="3.30.1330.50">
    <property type="entry name" value="2-C-methyl-D-erythritol 2,4-cyclodiphosphate synthase"/>
    <property type="match status" value="1"/>
</dbReference>
<dbReference type="HAMAP" id="MF_00107">
    <property type="entry name" value="IspF"/>
    <property type="match status" value="1"/>
</dbReference>
<dbReference type="InterPro" id="IPR003526">
    <property type="entry name" value="MECDP_synthase"/>
</dbReference>
<dbReference type="InterPro" id="IPR020555">
    <property type="entry name" value="MECDP_synthase_CS"/>
</dbReference>
<dbReference type="InterPro" id="IPR036571">
    <property type="entry name" value="MECDP_synthase_sf"/>
</dbReference>
<dbReference type="NCBIfam" id="TIGR00151">
    <property type="entry name" value="ispF"/>
    <property type="match status" value="1"/>
</dbReference>
<dbReference type="PANTHER" id="PTHR43181">
    <property type="entry name" value="2-C-METHYL-D-ERYTHRITOL 2,4-CYCLODIPHOSPHATE SYNTHASE, CHLOROPLASTIC"/>
    <property type="match status" value="1"/>
</dbReference>
<dbReference type="PANTHER" id="PTHR43181:SF1">
    <property type="entry name" value="2-C-METHYL-D-ERYTHRITOL 2,4-CYCLODIPHOSPHATE SYNTHASE, CHLOROPLASTIC"/>
    <property type="match status" value="1"/>
</dbReference>
<dbReference type="Pfam" id="PF02542">
    <property type="entry name" value="YgbB"/>
    <property type="match status" value="1"/>
</dbReference>
<dbReference type="SUPFAM" id="SSF69765">
    <property type="entry name" value="IpsF-like"/>
    <property type="match status" value="1"/>
</dbReference>
<dbReference type="PROSITE" id="PS01350">
    <property type="entry name" value="ISPF"/>
    <property type="match status" value="1"/>
</dbReference>